<organism>
    <name type="scientific">Desulforudis audaxviator (strain MP104C)</name>
    <dbReference type="NCBI Taxonomy" id="477974"/>
    <lineage>
        <taxon>Bacteria</taxon>
        <taxon>Bacillati</taxon>
        <taxon>Bacillota</taxon>
        <taxon>Clostridia</taxon>
        <taxon>Thermoanaerobacterales</taxon>
        <taxon>Candidatus Desulforudaceae</taxon>
        <taxon>Candidatus Desulforudis</taxon>
    </lineage>
</organism>
<keyword id="KW-0004">4Fe-4S</keyword>
<keyword id="KW-0963">Cytoplasm</keyword>
<keyword id="KW-0408">Iron</keyword>
<keyword id="KW-0411">Iron-sulfur</keyword>
<keyword id="KW-0479">Metal-binding</keyword>
<keyword id="KW-0662">Pyridine nucleotide biosynthesis</keyword>
<keyword id="KW-1185">Reference proteome</keyword>
<keyword id="KW-0808">Transferase</keyword>
<name>NADA_DESAP</name>
<sequence>MDISDELVAEINELRRRRKAIILSHYYQRPEVQDIADFVGDSLQLSRTAAATEAEVIVFCGVHFMAETAAILSPYKTVVLPDLRAGCPMADMAEVESLRSKKAELGDPVVVSYVNTTADVKAESDICCTSANVVRVIESISPDRRILFVPDRNLGAYAARQTGRELVLWPGFCCVHDDILPEHILRAKRKHPEALVVVHPECRPDVIDLADKVASTSGMVQFVRDSSFREFIIGTEEGITHQMGKLCPGKKFYLPSRGMVCGSMKLITLTKVRDALKRLEPRITVPEHIRYRALQSLERMLAL</sequence>
<comment type="function">
    <text evidence="1">Catalyzes the condensation of iminoaspartate with dihydroxyacetone phosphate to form quinolinate.</text>
</comment>
<comment type="catalytic activity">
    <reaction evidence="1">
        <text>iminosuccinate + dihydroxyacetone phosphate = quinolinate + phosphate + 2 H2O + H(+)</text>
        <dbReference type="Rhea" id="RHEA:25888"/>
        <dbReference type="ChEBI" id="CHEBI:15377"/>
        <dbReference type="ChEBI" id="CHEBI:15378"/>
        <dbReference type="ChEBI" id="CHEBI:29959"/>
        <dbReference type="ChEBI" id="CHEBI:43474"/>
        <dbReference type="ChEBI" id="CHEBI:57642"/>
        <dbReference type="ChEBI" id="CHEBI:77875"/>
        <dbReference type="EC" id="2.5.1.72"/>
    </reaction>
    <physiologicalReaction direction="left-to-right" evidence="1">
        <dbReference type="Rhea" id="RHEA:25889"/>
    </physiologicalReaction>
</comment>
<comment type="cofactor">
    <cofactor evidence="1">
        <name>[4Fe-4S] cluster</name>
        <dbReference type="ChEBI" id="CHEBI:49883"/>
    </cofactor>
    <text evidence="1">Binds 1 [4Fe-4S] cluster per subunit.</text>
</comment>
<comment type="pathway">
    <text evidence="1">Cofactor biosynthesis; NAD(+) biosynthesis; quinolinate from iminoaspartate: step 1/1.</text>
</comment>
<comment type="subcellular location">
    <subcellularLocation>
        <location evidence="1">Cytoplasm</location>
    </subcellularLocation>
</comment>
<comment type="similarity">
    <text evidence="1">Belongs to the quinolinate synthase family. Type 2 subfamily.</text>
</comment>
<protein>
    <recommendedName>
        <fullName evidence="1">Quinolinate synthase</fullName>
        <ecNumber evidence="1">2.5.1.72</ecNumber>
    </recommendedName>
</protein>
<evidence type="ECO:0000255" key="1">
    <source>
        <dbReference type="HAMAP-Rule" id="MF_00568"/>
    </source>
</evidence>
<gene>
    <name evidence="1" type="primary">nadA</name>
    <name type="ordered locus">Daud_0121</name>
</gene>
<feature type="chain" id="PRO_1000146813" description="Quinolinate synthase">
    <location>
        <begin position="1"/>
        <end position="303"/>
    </location>
</feature>
<feature type="binding site" evidence="1">
    <location>
        <position position="25"/>
    </location>
    <ligand>
        <name>iminosuccinate</name>
        <dbReference type="ChEBI" id="CHEBI:77875"/>
    </ligand>
</feature>
<feature type="binding site" evidence="1">
    <location>
        <position position="42"/>
    </location>
    <ligand>
        <name>iminosuccinate</name>
        <dbReference type="ChEBI" id="CHEBI:77875"/>
    </ligand>
</feature>
<feature type="binding site" evidence="1">
    <location>
        <position position="87"/>
    </location>
    <ligand>
        <name>[4Fe-4S] cluster</name>
        <dbReference type="ChEBI" id="CHEBI:49883"/>
    </ligand>
</feature>
<feature type="binding site" evidence="1">
    <location>
        <begin position="113"/>
        <end position="115"/>
    </location>
    <ligand>
        <name>iminosuccinate</name>
        <dbReference type="ChEBI" id="CHEBI:77875"/>
    </ligand>
</feature>
<feature type="binding site" evidence="1">
    <location>
        <position position="130"/>
    </location>
    <ligand>
        <name>iminosuccinate</name>
        <dbReference type="ChEBI" id="CHEBI:77875"/>
    </ligand>
</feature>
<feature type="binding site" evidence="1">
    <location>
        <position position="173"/>
    </location>
    <ligand>
        <name>[4Fe-4S] cluster</name>
        <dbReference type="ChEBI" id="CHEBI:49883"/>
    </ligand>
</feature>
<feature type="binding site" evidence="1">
    <location>
        <begin position="199"/>
        <end position="201"/>
    </location>
    <ligand>
        <name>iminosuccinate</name>
        <dbReference type="ChEBI" id="CHEBI:77875"/>
    </ligand>
</feature>
<feature type="binding site" evidence="1">
    <location>
        <position position="216"/>
    </location>
    <ligand>
        <name>iminosuccinate</name>
        <dbReference type="ChEBI" id="CHEBI:77875"/>
    </ligand>
</feature>
<feature type="binding site" evidence="1">
    <location>
        <position position="261"/>
    </location>
    <ligand>
        <name>[4Fe-4S] cluster</name>
        <dbReference type="ChEBI" id="CHEBI:49883"/>
    </ligand>
</feature>
<accession>B1I1G4</accession>
<dbReference type="EC" id="2.5.1.72" evidence="1"/>
<dbReference type="EMBL" id="CP000860">
    <property type="protein sequence ID" value="ACA58689.1"/>
    <property type="molecule type" value="Genomic_DNA"/>
</dbReference>
<dbReference type="RefSeq" id="WP_012301283.1">
    <property type="nucleotide sequence ID" value="NC_010424.1"/>
</dbReference>
<dbReference type="SMR" id="B1I1G4"/>
<dbReference type="STRING" id="477974.Daud_0121"/>
<dbReference type="KEGG" id="dau:Daud_0121"/>
<dbReference type="eggNOG" id="COG0379">
    <property type="taxonomic scope" value="Bacteria"/>
</dbReference>
<dbReference type="HOGENOM" id="CLU_047382_0_0_9"/>
<dbReference type="OrthoDB" id="9801204at2"/>
<dbReference type="UniPathway" id="UPA00253">
    <property type="reaction ID" value="UER00327"/>
</dbReference>
<dbReference type="Proteomes" id="UP000008544">
    <property type="component" value="Chromosome"/>
</dbReference>
<dbReference type="GO" id="GO:0005737">
    <property type="term" value="C:cytoplasm"/>
    <property type="evidence" value="ECO:0007669"/>
    <property type="project" value="UniProtKB-SubCell"/>
</dbReference>
<dbReference type="GO" id="GO:0051539">
    <property type="term" value="F:4 iron, 4 sulfur cluster binding"/>
    <property type="evidence" value="ECO:0007669"/>
    <property type="project" value="UniProtKB-KW"/>
</dbReference>
<dbReference type="GO" id="GO:0046872">
    <property type="term" value="F:metal ion binding"/>
    <property type="evidence" value="ECO:0007669"/>
    <property type="project" value="UniProtKB-KW"/>
</dbReference>
<dbReference type="GO" id="GO:0008987">
    <property type="term" value="F:quinolinate synthetase A activity"/>
    <property type="evidence" value="ECO:0007669"/>
    <property type="project" value="UniProtKB-UniRule"/>
</dbReference>
<dbReference type="GO" id="GO:0034628">
    <property type="term" value="P:'de novo' NAD biosynthetic process from L-aspartate"/>
    <property type="evidence" value="ECO:0007669"/>
    <property type="project" value="TreeGrafter"/>
</dbReference>
<dbReference type="Gene3D" id="3.40.50.10800">
    <property type="entry name" value="NadA-like"/>
    <property type="match status" value="3"/>
</dbReference>
<dbReference type="HAMAP" id="MF_00568">
    <property type="entry name" value="NadA_type2"/>
    <property type="match status" value="1"/>
</dbReference>
<dbReference type="InterPro" id="IPR003473">
    <property type="entry name" value="NadA"/>
</dbReference>
<dbReference type="InterPro" id="IPR036094">
    <property type="entry name" value="NadA_sf"/>
</dbReference>
<dbReference type="InterPro" id="IPR023066">
    <property type="entry name" value="Quinolinate_synth_type2"/>
</dbReference>
<dbReference type="NCBIfam" id="TIGR00550">
    <property type="entry name" value="nadA"/>
    <property type="match status" value="1"/>
</dbReference>
<dbReference type="NCBIfam" id="NF006878">
    <property type="entry name" value="PRK09375.1-2"/>
    <property type="match status" value="1"/>
</dbReference>
<dbReference type="PANTHER" id="PTHR30573:SF0">
    <property type="entry name" value="QUINOLINATE SYNTHASE, CHLOROPLASTIC"/>
    <property type="match status" value="1"/>
</dbReference>
<dbReference type="PANTHER" id="PTHR30573">
    <property type="entry name" value="QUINOLINATE SYNTHETASE A"/>
    <property type="match status" value="1"/>
</dbReference>
<dbReference type="Pfam" id="PF02445">
    <property type="entry name" value="NadA"/>
    <property type="match status" value="1"/>
</dbReference>
<dbReference type="SUPFAM" id="SSF142754">
    <property type="entry name" value="NadA-like"/>
    <property type="match status" value="1"/>
</dbReference>
<reference key="1">
    <citation type="submission" date="2007-10" db="EMBL/GenBank/DDBJ databases">
        <title>Complete sequence of chromosome of Desulforudis audaxviator MP104C.</title>
        <authorList>
            <person name="Copeland A."/>
            <person name="Lucas S."/>
            <person name="Lapidus A."/>
            <person name="Barry K."/>
            <person name="Glavina del Rio T."/>
            <person name="Dalin E."/>
            <person name="Tice H."/>
            <person name="Bruce D."/>
            <person name="Pitluck S."/>
            <person name="Lowry S.R."/>
            <person name="Larimer F."/>
            <person name="Land M.L."/>
            <person name="Hauser L."/>
            <person name="Kyrpides N."/>
            <person name="Ivanova N.N."/>
            <person name="Richardson P."/>
        </authorList>
    </citation>
    <scope>NUCLEOTIDE SEQUENCE [LARGE SCALE GENOMIC DNA]</scope>
    <source>
        <strain>MP104C</strain>
    </source>
</reference>
<proteinExistence type="inferred from homology"/>